<reference key="1">
    <citation type="journal article" date="2004" name="Nature">
        <title>Genome evolution in yeasts.</title>
        <authorList>
            <person name="Dujon B."/>
            <person name="Sherman D."/>
            <person name="Fischer G."/>
            <person name="Durrens P."/>
            <person name="Casaregola S."/>
            <person name="Lafontaine I."/>
            <person name="de Montigny J."/>
            <person name="Marck C."/>
            <person name="Neuveglise C."/>
            <person name="Talla E."/>
            <person name="Goffard N."/>
            <person name="Frangeul L."/>
            <person name="Aigle M."/>
            <person name="Anthouard V."/>
            <person name="Babour A."/>
            <person name="Barbe V."/>
            <person name="Barnay S."/>
            <person name="Blanchin S."/>
            <person name="Beckerich J.-M."/>
            <person name="Beyne E."/>
            <person name="Bleykasten C."/>
            <person name="Boisrame A."/>
            <person name="Boyer J."/>
            <person name="Cattolico L."/>
            <person name="Confanioleri F."/>
            <person name="de Daruvar A."/>
            <person name="Despons L."/>
            <person name="Fabre E."/>
            <person name="Fairhead C."/>
            <person name="Ferry-Dumazet H."/>
            <person name="Groppi A."/>
            <person name="Hantraye F."/>
            <person name="Hennequin C."/>
            <person name="Jauniaux N."/>
            <person name="Joyet P."/>
            <person name="Kachouri R."/>
            <person name="Kerrest A."/>
            <person name="Koszul R."/>
            <person name="Lemaire M."/>
            <person name="Lesur I."/>
            <person name="Ma L."/>
            <person name="Muller H."/>
            <person name="Nicaud J.-M."/>
            <person name="Nikolski M."/>
            <person name="Oztas S."/>
            <person name="Ozier-Kalogeropoulos O."/>
            <person name="Pellenz S."/>
            <person name="Potier S."/>
            <person name="Richard G.-F."/>
            <person name="Straub M.-L."/>
            <person name="Suleau A."/>
            <person name="Swennen D."/>
            <person name="Tekaia F."/>
            <person name="Wesolowski-Louvel M."/>
            <person name="Westhof E."/>
            <person name="Wirth B."/>
            <person name="Zeniou-Meyer M."/>
            <person name="Zivanovic Y."/>
            <person name="Bolotin-Fukuhara M."/>
            <person name="Thierry A."/>
            <person name="Bouchier C."/>
            <person name="Caudron B."/>
            <person name="Scarpelli C."/>
            <person name="Gaillardin C."/>
            <person name="Weissenbach J."/>
            <person name="Wincker P."/>
            <person name="Souciet J.-L."/>
        </authorList>
    </citation>
    <scope>NUCLEOTIDE SEQUENCE [LARGE SCALE GENOMIC DNA]</scope>
    <source>
        <strain>ATCC 36239 / CBS 767 / BCRC 21394 / JCM 1990 / NBRC 0083 / IGC 2968</strain>
    </source>
</reference>
<accession>Q6BK34</accession>
<organism>
    <name type="scientific">Debaryomyces hansenii (strain ATCC 36239 / CBS 767 / BCRC 21394 / JCM 1990 / NBRC 0083 / IGC 2968)</name>
    <name type="common">Yeast</name>
    <name type="synonym">Torulaspora hansenii</name>
    <dbReference type="NCBI Taxonomy" id="284592"/>
    <lineage>
        <taxon>Eukaryota</taxon>
        <taxon>Fungi</taxon>
        <taxon>Dikarya</taxon>
        <taxon>Ascomycota</taxon>
        <taxon>Saccharomycotina</taxon>
        <taxon>Pichiomycetes</taxon>
        <taxon>Debaryomycetaceae</taxon>
        <taxon>Debaryomyces</taxon>
    </lineage>
</organism>
<gene>
    <name type="primary">HAT2</name>
    <name type="ordered locus">DEHA2F25234g</name>
</gene>
<evidence type="ECO:0000250" key="1"/>
<evidence type="ECO:0000250" key="2">
    <source>
        <dbReference type="UniProtKB" id="P39984"/>
    </source>
</evidence>
<evidence type="ECO:0000305" key="3"/>
<keyword id="KW-0156">Chromatin regulator</keyword>
<keyword id="KW-0963">Cytoplasm</keyword>
<keyword id="KW-0539">Nucleus</keyword>
<keyword id="KW-1185">Reference proteome</keyword>
<keyword id="KW-0677">Repeat</keyword>
<keyword id="KW-0853">WD repeat</keyword>
<sequence length="415" mass="46604">MSLEAEVPELGQDDSQRELTIKEEYQLWRKNCRYMYEFVSETALTWPSLTIQWLPENKTNEAEGLIDAKLLLGTHTSGEDTNYLKLASTQIPLSNSSNTEEKSNKKVTSRIKITKKFENNFEINRARYMPQDPSIVSTINGAGEIDLYNLGGDQKTAIAHFTPHEDNGYGLSWSPHKKGYLLTASDDKTVVLTDTSRLDATDLSQVCKFTTHKDIVNDAKWHQFDESLFGSVSDDKYFYLFDIRTPGEPVSKFYHPESEGINSLSFSPFSQYLVATGNANSNISLLDTRKLSTKSAVSDGLLHTMMGHSDSITSLEFSPHKDGMLASGSQDRRLILWDLFKVGEEQAQEDAEDGCPELFMMHAGHTGAVTDLSWCPYKDWTIGSVADDNIVHLWEIGKTLLNAEKGIELKDTDLE</sequence>
<proteinExistence type="inferred from homology"/>
<name>HAT2_DEBHA</name>
<comment type="function">
    <text evidence="2">Regulatory subunit of the histone acetylase B (HAT-B) complex. The complex acetylates 'Lys-12' of histone H4 which is required for telomeric silencing.</text>
</comment>
<comment type="subunit">
    <text evidence="1 2">Component of the HAT-B complex composed of at least HAT1 and HAT2. The HAT-B complex binds to histone H4 tail.</text>
</comment>
<comment type="subcellular location">
    <subcellularLocation>
        <location evidence="1">Cytoplasm</location>
    </subcellularLocation>
    <subcellularLocation>
        <location evidence="1">Nucleus</location>
    </subcellularLocation>
</comment>
<comment type="similarity">
    <text evidence="3">Belongs to the WD repeat RBAP46/RBAP48/MSI1 family.</text>
</comment>
<feature type="chain" id="PRO_0000227738" description="Histone acetyltransferase type B subunit 2">
    <location>
        <begin position="1"/>
        <end position="415"/>
    </location>
</feature>
<feature type="repeat" description="WD 1">
    <location>
        <begin position="118"/>
        <end position="158"/>
    </location>
</feature>
<feature type="repeat" description="WD 2">
    <location>
        <begin position="163"/>
        <end position="203"/>
    </location>
</feature>
<feature type="repeat" description="WD 3">
    <location>
        <begin position="211"/>
        <end position="251"/>
    </location>
</feature>
<feature type="repeat" description="WD 4">
    <location>
        <begin position="256"/>
        <end position="296"/>
    </location>
</feature>
<feature type="repeat" description="WD 5">
    <location>
        <begin position="307"/>
        <end position="347"/>
    </location>
</feature>
<feature type="repeat" description="WD 6">
    <location>
        <begin position="364"/>
        <end position="404"/>
    </location>
</feature>
<feature type="region of interest" description="Interaction with the histone H4 N-terminus" evidence="2">
    <location>
        <begin position="349"/>
        <end position="353"/>
    </location>
</feature>
<feature type="site" description="Important for interaction with HAT1" evidence="2">
    <location>
        <position position="273"/>
    </location>
</feature>
<dbReference type="EMBL" id="CR382138">
    <property type="protein sequence ID" value="CAG89852.1"/>
    <property type="molecule type" value="Genomic_DNA"/>
</dbReference>
<dbReference type="RefSeq" id="XP_461437.1">
    <property type="nucleotide sequence ID" value="XM_461437.1"/>
</dbReference>
<dbReference type="SMR" id="Q6BK34"/>
<dbReference type="FunCoup" id="Q6BK34">
    <property type="interactions" value="1134"/>
</dbReference>
<dbReference type="STRING" id="284592.Q6BK34"/>
<dbReference type="GeneID" id="2903203"/>
<dbReference type="KEGG" id="dha:DEHA2F25234g"/>
<dbReference type="VEuPathDB" id="FungiDB:DEHA2F25234g"/>
<dbReference type="eggNOG" id="KOG0264">
    <property type="taxonomic scope" value="Eukaryota"/>
</dbReference>
<dbReference type="HOGENOM" id="CLU_020445_3_1_1"/>
<dbReference type="InParanoid" id="Q6BK34"/>
<dbReference type="OMA" id="PHEEGCL"/>
<dbReference type="OrthoDB" id="427795at2759"/>
<dbReference type="Proteomes" id="UP000000599">
    <property type="component" value="Chromosome F"/>
</dbReference>
<dbReference type="GO" id="GO:0005737">
    <property type="term" value="C:cytoplasm"/>
    <property type="evidence" value="ECO:0007669"/>
    <property type="project" value="UniProtKB-SubCell"/>
</dbReference>
<dbReference type="GO" id="GO:0005634">
    <property type="term" value="C:nucleus"/>
    <property type="evidence" value="ECO:0007669"/>
    <property type="project" value="UniProtKB-SubCell"/>
</dbReference>
<dbReference type="GO" id="GO:0006325">
    <property type="term" value="P:chromatin organization"/>
    <property type="evidence" value="ECO:0007669"/>
    <property type="project" value="UniProtKB-KW"/>
</dbReference>
<dbReference type="Gene3D" id="2.130.10.10">
    <property type="entry name" value="YVTN repeat-like/Quinoprotein amine dehydrogenase"/>
    <property type="match status" value="1"/>
</dbReference>
<dbReference type="InterPro" id="IPR022052">
    <property type="entry name" value="Histone-bd_RBBP4-like_N"/>
</dbReference>
<dbReference type="InterPro" id="IPR015943">
    <property type="entry name" value="WD40/YVTN_repeat-like_dom_sf"/>
</dbReference>
<dbReference type="InterPro" id="IPR019775">
    <property type="entry name" value="WD40_repeat_CS"/>
</dbReference>
<dbReference type="InterPro" id="IPR036322">
    <property type="entry name" value="WD40_repeat_dom_sf"/>
</dbReference>
<dbReference type="InterPro" id="IPR001680">
    <property type="entry name" value="WD40_rpt"/>
</dbReference>
<dbReference type="InterPro" id="IPR050459">
    <property type="entry name" value="WD_repeat_RBAP46/RBAP48/MSI1"/>
</dbReference>
<dbReference type="PANTHER" id="PTHR22850">
    <property type="entry name" value="WD40 REPEAT FAMILY"/>
    <property type="match status" value="1"/>
</dbReference>
<dbReference type="Pfam" id="PF12265">
    <property type="entry name" value="CAF1C_H4-bd"/>
    <property type="match status" value="1"/>
</dbReference>
<dbReference type="Pfam" id="PF00400">
    <property type="entry name" value="WD40"/>
    <property type="match status" value="3"/>
</dbReference>
<dbReference type="SMART" id="SM00320">
    <property type="entry name" value="WD40"/>
    <property type="match status" value="5"/>
</dbReference>
<dbReference type="SUPFAM" id="SSF50978">
    <property type="entry name" value="WD40 repeat-like"/>
    <property type="match status" value="1"/>
</dbReference>
<dbReference type="PROSITE" id="PS00678">
    <property type="entry name" value="WD_REPEATS_1"/>
    <property type="match status" value="2"/>
</dbReference>
<dbReference type="PROSITE" id="PS50082">
    <property type="entry name" value="WD_REPEATS_2"/>
    <property type="match status" value="2"/>
</dbReference>
<dbReference type="PROSITE" id="PS50294">
    <property type="entry name" value="WD_REPEATS_REGION"/>
    <property type="match status" value="1"/>
</dbReference>
<protein>
    <recommendedName>
        <fullName>Histone acetyltransferase type B subunit 2</fullName>
    </recommendedName>
</protein>